<gene>
    <name evidence="6" type="primary">AA14A</name>
    <name type="ORF">TRUGW13939_06860</name>
</gene>
<accession>A0A7H8R162</accession>
<organism>
    <name type="scientific">Talaromyces rugulosus</name>
    <name type="common">Penicillium rugulosum</name>
    <dbReference type="NCBI Taxonomy" id="121627"/>
    <lineage>
        <taxon>Eukaryota</taxon>
        <taxon>Fungi</taxon>
        <taxon>Dikarya</taxon>
        <taxon>Ascomycota</taxon>
        <taxon>Pezizomycotina</taxon>
        <taxon>Eurotiomycetes</taxon>
        <taxon>Eurotiomycetidae</taxon>
        <taxon>Eurotiales</taxon>
        <taxon>Trichocomaceae</taxon>
        <taxon>Talaromyces</taxon>
        <taxon>Talaromyces sect. Islandici</taxon>
    </lineage>
</organism>
<sequence length="287" mass="31129">MLRILTLSILATSKLASAHVVAWHPGMYCLGGNDTSVDDPNTNLAVNPLWDLPKSKWWFQADRGCDKAPPVDGVFLELPAGQNFTTELAHNRAQTTLSFNGQYAGEWPDGKDHPEDWSGTGTPPGCIQDDGAIHTNNQTMAGGTVFAISYQSDMSQVTMENLVVFSVLEHTPWKRIATYEVPADLPPCPDAGCICAWGWVPQGCGEPNMYMAGYKCKVTGSSSTKQLAQAQVPKYCANDTSECVGGAKQILVMNQADGNNVVAPDNDFVAYNEKWGFQNGAQNDIFM</sequence>
<comment type="function">
    <text evidence="5">Lytic polysaccharide monooxygenase (LPMO) that has a broad substrate specificity with strong oxidative activity on pure amorphous cellulose and xyloglucan and plays as a bifunctional enzyme to decompose some specific network structures formed between cellulose and hemicellulose in the plant cell walls (PubMed:38395898). Catalysis by LPMOs requires the reduction of the active-site copper from Cu(II) to Cu(I) by a reducing agent and H(2)O(2) or O(2) as a cosubstrate (PubMed:38395898). Simultaneously oxidizes cellulose, xylan and xyloglucan in natural hemi/cellulosic substrate such as fibrillated eucalyptus pulp, and releases native and oxidized cello-oligosaccharides, xylo-oligosaccharides and xyloglucan oligosaccharides from this substrate (PubMed:38395898). The cellulolytic/hemicellulolytic activity becomes weaker as the contents of xylan increase in the alkaline-extracted hemi/cellulosic substrates (PubMed:38395898).</text>
</comment>
<comment type="cofactor">
    <cofactor evidence="5">
        <name>Cu(2+)</name>
        <dbReference type="ChEBI" id="CHEBI:29036"/>
    </cofactor>
    <text evidence="5">Binds 1 copper ion per subunit.</text>
</comment>
<comment type="biophysicochemical properties">
    <kinetics>
        <KM evidence="5">0.26 mM for H(2)O(2)</KM>
        <KM evidence="5">0.79 mM for 2,6-dimethoxyphenol (2,6-DMP)</KM>
    </kinetics>
</comment>
<comment type="subcellular location">
    <subcellularLocation>
        <location evidence="1">Secreted</location>
    </subcellularLocation>
</comment>
<comment type="similarity">
    <text evidence="7">Belongs to the polysaccharide monooxygenase AA14 family.</text>
</comment>
<proteinExistence type="evidence at protein level"/>
<protein>
    <recommendedName>
        <fullName evidence="6">AA14 family lytic polysaccharide monooxygenase A</fullName>
        <shortName evidence="6">LPMO AA14A</shortName>
        <ecNumber evidence="5">1.14.99.-</ecNumber>
    </recommendedName>
</protein>
<evidence type="ECO:0000250" key="1">
    <source>
        <dbReference type="UniProtKB" id="A0A2I6QAZ5"/>
    </source>
</evidence>
<evidence type="ECO:0000250" key="2">
    <source>
        <dbReference type="UniProtKB" id="A0A2I6QB00"/>
    </source>
</evidence>
<evidence type="ECO:0000255" key="3"/>
<evidence type="ECO:0000255" key="4">
    <source>
        <dbReference type="PROSITE-ProRule" id="PRU00498"/>
    </source>
</evidence>
<evidence type="ECO:0000269" key="5">
    <source>
    </source>
</evidence>
<evidence type="ECO:0000303" key="6">
    <source>
    </source>
</evidence>
<evidence type="ECO:0000305" key="7"/>
<keyword id="KW-0186">Copper</keyword>
<keyword id="KW-1015">Disulfide bond</keyword>
<keyword id="KW-0325">Glycoprotein</keyword>
<keyword id="KW-0479">Metal-binding</keyword>
<keyword id="KW-0503">Monooxygenase</keyword>
<keyword id="KW-0560">Oxidoreductase</keyword>
<keyword id="KW-1185">Reference proteome</keyword>
<keyword id="KW-0964">Secreted</keyword>
<keyword id="KW-0732">Signal</keyword>
<reference key="1">
    <citation type="journal article" date="2020" name="Mol. Plant Microbe Interact.">
        <title>Chromosome-scale genome assembly of Talaromyces rugulosus W13939, a mycoparasitic fungus and promising biocontrol agent.</title>
        <authorList>
            <person name="Wang B."/>
            <person name="Guo L."/>
            <person name="Ye K."/>
            <person name="Wang L."/>
        </authorList>
    </citation>
    <scope>NUCLEOTIDE SEQUENCE [LARGE SCALE GENOMIC DNA]</scope>
    <source>
        <strain>W13939</strain>
    </source>
</reference>
<reference key="2">
    <citation type="journal article" date="2024" name="Biotechnol. Biofuels Bioprod.">
        <title>A novel AA14 LPMO from Talaromyces rugulosus with bifunctional cellulolytic/hemicellulolytic activity boosted cellulose hydrolysis.</title>
        <authorList>
            <person name="Chen K."/>
            <person name="Zhao X."/>
            <person name="Zhang P."/>
            <person name="Long L."/>
            <person name="Ding S."/>
        </authorList>
    </citation>
    <scope>FUNCTION</scope>
    <scope>CATALYTIC ACTIVITY</scope>
    <scope>BIOPHYSICOCHEMICAL PROPERTIES</scope>
    <scope>SUBSTRATE SPECIFICITY</scope>
    <scope>BIOTECHNOLOGY</scope>
</reference>
<dbReference type="EC" id="1.14.99.-" evidence="5"/>
<dbReference type="EMBL" id="CP055901">
    <property type="protein sequence ID" value="QKX59718.1"/>
    <property type="molecule type" value="Genomic_DNA"/>
</dbReference>
<dbReference type="SMR" id="A0A7H8R162"/>
<dbReference type="OrthoDB" id="2019572at2759"/>
<dbReference type="Proteomes" id="UP000509510">
    <property type="component" value="Chromosome IV"/>
</dbReference>
<dbReference type="GO" id="GO:0005576">
    <property type="term" value="C:extracellular region"/>
    <property type="evidence" value="ECO:0007669"/>
    <property type="project" value="UniProtKB-SubCell"/>
</dbReference>
<dbReference type="GO" id="GO:0046872">
    <property type="term" value="F:metal ion binding"/>
    <property type="evidence" value="ECO:0007669"/>
    <property type="project" value="UniProtKB-KW"/>
</dbReference>
<dbReference type="GO" id="GO:0004497">
    <property type="term" value="F:monooxygenase activity"/>
    <property type="evidence" value="ECO:0007669"/>
    <property type="project" value="UniProtKB-KW"/>
</dbReference>
<dbReference type="Gene3D" id="2.70.50.70">
    <property type="match status" value="1"/>
</dbReference>
<dbReference type="InterPro" id="IPR054497">
    <property type="entry name" value="LPMO_AA14"/>
</dbReference>
<dbReference type="Pfam" id="PF22810">
    <property type="entry name" value="LPMO_AA14"/>
    <property type="match status" value="1"/>
</dbReference>
<name>LP14A_TALRU</name>
<feature type="signal peptide" evidence="3">
    <location>
        <begin position="1"/>
        <end position="18"/>
    </location>
</feature>
<feature type="chain" id="PRO_5028814542" description="AA14 family lytic polysaccharide monooxygenase A">
    <location>
        <begin position="19"/>
        <end position="287"/>
    </location>
</feature>
<feature type="glycosylation site" description="N-linked (GlcNAc...) asparagine" evidence="4">
    <location>
        <position position="33"/>
    </location>
</feature>
<feature type="glycosylation site" description="N-linked (GlcNAc...) asparagine" evidence="4">
    <location>
        <position position="83"/>
    </location>
</feature>
<feature type="glycosylation site" description="N-linked (GlcNAc...) asparagine" evidence="4">
    <location>
        <position position="137"/>
    </location>
</feature>
<feature type="glycosylation site" description="N-linked (GlcNAc...) asparagine" evidence="4">
    <location>
        <position position="238"/>
    </location>
</feature>
<feature type="disulfide bond" evidence="2">
    <location>
        <begin position="188"/>
        <end position="193"/>
    </location>
</feature>
<feature type="disulfide bond" evidence="2">
    <location>
        <begin position="195"/>
        <end position="216"/>
    </location>
</feature>
<feature type="disulfide bond" evidence="2">
    <location>
        <begin position="236"/>
        <end position="243"/>
    </location>
</feature>